<comment type="function">
    <text evidence="2">Apoptotic regulator capable of exerting proapoptotic and anti-apoptotic activities and plays crucial roles in apoptosis, cell proliferation, and cell cycle control. Its anti-apoptotic activity is mediated through the inhibition of CASP3, CASP7 and CASP9, as well as by its E3 ubiquitin-protein ligase activity. As it is a weak caspase inhibitor, its anti-apoptotic activity is thought to be due to its ability to ubiquitinate DIABLO/SMAC targeting it for degradation thereby promoting cell survival. May contribute to caspase inhibition, by blocking the ability of DIABLO/SMAC to disrupt XIAP/BIRC4-caspase interactions. Protects against apoptosis induced by TNF or by chemical agents such as adriamycin, etoposide or staurosporine. Suppression of apoptosis is mediated by activation of MAPK8/JNK1, and possibly also of MAPK9/JNK2. This activation depends on TAB1 and MAP3K7/TAK1. In vitro, inhibits CASP3 and proteolytic activation of pro-CASP9.</text>
</comment>
<comment type="catalytic activity">
    <reaction evidence="2">
        <text>S-ubiquitinyl-[E2 ubiquitin-conjugating enzyme]-L-cysteine + [acceptor protein]-L-lysine = [E2 ubiquitin-conjugating enzyme]-L-cysteine + N(6)-ubiquitinyl-[acceptor protein]-L-lysine.</text>
        <dbReference type="EC" id="2.3.2.27"/>
    </reaction>
</comment>
<comment type="subunit">
    <text evidence="2">Binds to caspase-9. Interaction with DIABLO/SMAC via the BIR domain disrupts binding to caspase-9 and apoptotic suppressor activity. Interacts with TAB1. In vitro, interacts with caspase-3 and caspase-7 via its BIR domain.</text>
</comment>
<comment type="subcellular location">
    <subcellularLocation>
        <location evidence="2">Nucleus</location>
    </subcellularLocation>
    <subcellularLocation>
        <location evidence="2">Cytoplasm</location>
    </subcellularLocation>
    <subcellularLocation>
        <location evidence="2">Golgi apparatus</location>
    </subcellularLocation>
    <text evidence="2">Nuclear, and in a filamentous pattern throughout the cytoplasm. Full-length livin is detected exclusively cytoplasm, whereas the truncated form (tLivin) is found in the peri-nuclear region with marked localization to the Golgi apparatus; the accumulation of tLivin in the nucleus shows positive correlation with the increase in apoptosis.</text>
</comment>
<comment type="domain">
    <text evidence="2">The RING domain is essential for autoubiquitination.</text>
</comment>
<comment type="PTM">
    <text evidence="2">Autoubiquitinated and undergoes proteasome-mediated degradation.</text>
</comment>
<comment type="PTM">
    <text evidence="2">The truncated protein (tLivin) not only loses its anti-apoptotic effect but also acquires a pro-apoptotic effect.</text>
</comment>
<comment type="similarity">
    <text evidence="6">Belongs to the IAP family.</text>
</comment>
<comment type="sequence caution" evidence="6">
    <conflict type="erroneous initiation">
        <sequence resource="EMBL-CDS" id="AAI07261"/>
    </conflict>
    <text>Truncated N-terminus.</text>
</comment>
<comment type="sequence caution" evidence="6">
    <conflict type="erroneous initiation">
        <sequence resource="EMBL-CDS" id="AAI25014"/>
    </conflict>
    <text>Truncated N-terminus.</text>
</comment>
<organism>
    <name type="scientific">Mus musculus</name>
    <name type="common">Mouse</name>
    <dbReference type="NCBI Taxonomy" id="10090"/>
    <lineage>
        <taxon>Eukaryota</taxon>
        <taxon>Metazoa</taxon>
        <taxon>Chordata</taxon>
        <taxon>Craniata</taxon>
        <taxon>Vertebrata</taxon>
        <taxon>Euteleostomi</taxon>
        <taxon>Mammalia</taxon>
        <taxon>Eutheria</taxon>
        <taxon>Euarchontoglires</taxon>
        <taxon>Glires</taxon>
        <taxon>Rodentia</taxon>
        <taxon>Myomorpha</taxon>
        <taxon>Muroidea</taxon>
        <taxon>Muridae</taxon>
        <taxon>Murinae</taxon>
        <taxon>Mus</taxon>
        <taxon>Mus</taxon>
    </lineage>
</organism>
<reference key="1">
    <citation type="journal article" date="2009" name="PLoS Biol.">
        <title>Lineage-specific biology revealed by a finished genome assembly of the mouse.</title>
        <authorList>
            <person name="Church D.M."/>
            <person name="Goodstadt L."/>
            <person name="Hillier L.W."/>
            <person name="Zody M.C."/>
            <person name="Goldstein S."/>
            <person name="She X."/>
            <person name="Bult C.J."/>
            <person name="Agarwala R."/>
            <person name="Cherry J.L."/>
            <person name="DiCuccio M."/>
            <person name="Hlavina W."/>
            <person name="Kapustin Y."/>
            <person name="Meric P."/>
            <person name="Maglott D."/>
            <person name="Birtle Z."/>
            <person name="Marques A.C."/>
            <person name="Graves T."/>
            <person name="Zhou S."/>
            <person name="Teague B."/>
            <person name="Potamousis K."/>
            <person name="Churas C."/>
            <person name="Place M."/>
            <person name="Herschleb J."/>
            <person name="Runnheim R."/>
            <person name="Forrest D."/>
            <person name="Amos-Landgraf J."/>
            <person name="Schwartz D.C."/>
            <person name="Cheng Z."/>
            <person name="Lindblad-Toh K."/>
            <person name="Eichler E.E."/>
            <person name="Ponting C.P."/>
        </authorList>
    </citation>
    <scope>NUCLEOTIDE SEQUENCE [LARGE SCALE GENOMIC DNA]</scope>
    <source>
        <strain>C57BL/6J</strain>
    </source>
</reference>
<reference key="2">
    <citation type="journal article" date="2004" name="Genome Res.">
        <title>The status, quality, and expansion of the NIH full-length cDNA project: the Mammalian Gene Collection (MGC).</title>
        <authorList>
            <consortium name="The MGC Project Team"/>
        </authorList>
    </citation>
    <scope>NUCLEOTIDE SEQUENCE [LARGE SCALE MRNA] OF 1-266</scope>
</reference>
<accession>A2AWP0</accession>
<accession>A0AUK9</accession>
<name>BIRC7_MOUSE</name>
<evidence type="ECO:0000250" key="1"/>
<evidence type="ECO:0000250" key="2">
    <source>
        <dbReference type="UniProtKB" id="Q96CA5"/>
    </source>
</evidence>
<evidence type="ECO:0000255" key="3">
    <source>
        <dbReference type="PROSITE-ProRule" id="PRU00029"/>
    </source>
</evidence>
<evidence type="ECO:0000255" key="4">
    <source>
        <dbReference type="PROSITE-ProRule" id="PRU00175"/>
    </source>
</evidence>
<evidence type="ECO:0000256" key="5">
    <source>
        <dbReference type="SAM" id="MobiDB-lite"/>
    </source>
</evidence>
<evidence type="ECO:0000305" key="6"/>
<sequence>MFSPADLFRAAVFSMGPESRARDSVRGPELSHREDGSGRTQEQDKPHCPCNHVLGQDCLDGQILGQLRPLSEEEESSGAAFLGEPAFPEMDSEDLRLASFYDWPSTAGIQPEPLAAAGFFHTGQQDKVRCFFCYGGLQSWERGDDPWTEHARWFPRCQFLLRSKGRDFVERIQTYTPLLGSWDQREEPEDAVSATPSAPAHGSPELLRSRRETQPEDVSEPGAKDVQEQLRQLQEERRCKVCLDRAVSIVFVPCGHFVCTECAPNLQLCPICRVPICSCVRTFLS</sequence>
<gene>
    <name type="primary">Birc7</name>
    <name type="synonym">Livin</name>
</gene>
<keyword id="KW-0053">Apoptosis</keyword>
<keyword id="KW-0963">Cytoplasm</keyword>
<keyword id="KW-0333">Golgi apparatus</keyword>
<keyword id="KW-0479">Metal-binding</keyword>
<keyword id="KW-0539">Nucleus</keyword>
<keyword id="KW-0646">Protease inhibitor</keyword>
<keyword id="KW-1185">Reference proteome</keyword>
<keyword id="KW-0789">Thiol protease inhibitor</keyword>
<keyword id="KW-0808">Transferase</keyword>
<keyword id="KW-0832">Ubl conjugation</keyword>
<keyword id="KW-0833">Ubl conjugation pathway</keyword>
<keyword id="KW-0862">Zinc</keyword>
<keyword id="KW-0863">Zinc-finger</keyword>
<feature type="chain" id="PRO_0000416248" description="Baculoviral IAP repeat-containing protein 7">
    <location>
        <begin position="1"/>
        <end position="285"/>
    </location>
</feature>
<feature type="chain" id="PRO_0000416249" description="Baculoviral IAP repeat-containing protein 7 30 kDa subunit">
    <location>
        <begin position="53"/>
        <end position="285"/>
    </location>
</feature>
<feature type="repeat" description="BIR">
    <location>
        <begin position="96"/>
        <end position="161"/>
    </location>
</feature>
<feature type="zinc finger region" description="RING-type" evidence="4">
    <location>
        <begin position="239"/>
        <end position="273"/>
    </location>
</feature>
<feature type="region of interest" description="Disordered" evidence="5">
    <location>
        <begin position="18"/>
        <end position="47"/>
    </location>
</feature>
<feature type="region of interest" description="Disordered" evidence="5">
    <location>
        <begin position="184"/>
        <end position="225"/>
    </location>
</feature>
<feature type="compositionally biased region" description="Basic and acidic residues" evidence="5">
    <location>
        <begin position="19"/>
        <end position="47"/>
    </location>
</feature>
<feature type="binding site" evidence="3">
    <location>
        <position position="130"/>
    </location>
    <ligand>
        <name>Zn(2+)</name>
        <dbReference type="ChEBI" id="CHEBI:29105"/>
    </ligand>
</feature>
<feature type="binding site" evidence="3">
    <location>
        <position position="133"/>
    </location>
    <ligand>
        <name>Zn(2+)</name>
        <dbReference type="ChEBI" id="CHEBI:29105"/>
    </ligand>
</feature>
<feature type="binding site" evidence="3">
    <location>
        <position position="150"/>
    </location>
    <ligand>
        <name>Zn(2+)</name>
        <dbReference type="ChEBI" id="CHEBI:29105"/>
    </ligand>
</feature>
<feature type="binding site" evidence="3">
    <location>
        <position position="157"/>
    </location>
    <ligand>
        <name>Zn(2+)</name>
        <dbReference type="ChEBI" id="CHEBI:29105"/>
    </ligand>
</feature>
<feature type="site" description="Cleavage; by CASP3 and CASP7" evidence="1">
    <location>
        <begin position="52"/>
        <end position="53"/>
    </location>
</feature>
<dbReference type="EC" id="2.3.2.27" evidence="2"/>
<dbReference type="EMBL" id="AL954707">
    <property type="status" value="NOT_ANNOTATED_CDS"/>
    <property type="molecule type" value="Genomic_DNA"/>
</dbReference>
<dbReference type="EMBL" id="BC107260">
    <property type="protein sequence ID" value="AAI07261.1"/>
    <property type="status" value="ALT_INIT"/>
    <property type="molecule type" value="mRNA"/>
</dbReference>
<dbReference type="EMBL" id="BC125013">
    <property type="protein sequence ID" value="AAI25014.1"/>
    <property type="status" value="ALT_INIT"/>
    <property type="molecule type" value="mRNA"/>
</dbReference>
<dbReference type="CCDS" id="CCDS50840.1"/>
<dbReference type="RefSeq" id="NP_001156719.1">
    <property type="nucleotide sequence ID" value="NM_001163247.1"/>
</dbReference>
<dbReference type="SMR" id="A2AWP0"/>
<dbReference type="BioGRID" id="236795">
    <property type="interactions" value="2"/>
</dbReference>
<dbReference type="FunCoup" id="A2AWP0">
    <property type="interactions" value="584"/>
</dbReference>
<dbReference type="STRING" id="10090.ENSMUSP00000104503"/>
<dbReference type="GlyGen" id="A2AWP0">
    <property type="glycosylation" value="1 site"/>
</dbReference>
<dbReference type="PhosphoSitePlus" id="A2AWP0"/>
<dbReference type="PaxDb" id="10090-ENSMUSP00000104503"/>
<dbReference type="ProteomicsDB" id="273785"/>
<dbReference type="Antibodypedia" id="15058">
    <property type="antibodies" value="651 antibodies from 43 providers"/>
</dbReference>
<dbReference type="Ensembl" id="ENSMUST00000108875.2">
    <property type="protein sequence ID" value="ENSMUSP00000104503.2"/>
    <property type="gene ID" value="ENSMUSG00000038840.8"/>
</dbReference>
<dbReference type="GeneID" id="329581"/>
<dbReference type="KEGG" id="mmu:329581"/>
<dbReference type="UCSC" id="uc008oke.2">
    <property type="organism name" value="mouse"/>
</dbReference>
<dbReference type="AGR" id="MGI:2676458"/>
<dbReference type="CTD" id="79444"/>
<dbReference type="MGI" id="MGI:2676458">
    <property type="gene designation" value="Birc7"/>
</dbReference>
<dbReference type="VEuPathDB" id="HostDB:ENSMUSG00000038840"/>
<dbReference type="eggNOG" id="KOG1101">
    <property type="taxonomic scope" value="Eukaryota"/>
</dbReference>
<dbReference type="GeneTree" id="ENSGT00940000160406"/>
<dbReference type="HOGENOM" id="CLU_016347_2_1_1"/>
<dbReference type="InParanoid" id="A2AWP0"/>
<dbReference type="OMA" id="SWEHGDD"/>
<dbReference type="OrthoDB" id="774873at2759"/>
<dbReference type="PhylomeDB" id="A2AWP0"/>
<dbReference type="TreeFam" id="TF105356"/>
<dbReference type="BioGRID-ORCS" id="329581">
    <property type="hits" value="0 hits in 80 CRISPR screens"/>
</dbReference>
<dbReference type="PRO" id="PR:A2AWP0"/>
<dbReference type="Proteomes" id="UP000000589">
    <property type="component" value="Chromosome 2"/>
</dbReference>
<dbReference type="RNAct" id="A2AWP0">
    <property type="molecule type" value="protein"/>
</dbReference>
<dbReference type="Bgee" id="ENSMUSG00000038840">
    <property type="expression patterns" value="Expressed in lens of camera-type eye and 13 other cell types or tissues"/>
</dbReference>
<dbReference type="GO" id="GO:0005813">
    <property type="term" value="C:centrosome"/>
    <property type="evidence" value="ECO:0007669"/>
    <property type="project" value="Ensembl"/>
</dbReference>
<dbReference type="GO" id="GO:0005737">
    <property type="term" value="C:cytoplasm"/>
    <property type="evidence" value="ECO:0000250"/>
    <property type="project" value="UniProtKB"/>
</dbReference>
<dbReference type="GO" id="GO:0005829">
    <property type="term" value="C:cytosol"/>
    <property type="evidence" value="ECO:0007669"/>
    <property type="project" value="Ensembl"/>
</dbReference>
<dbReference type="GO" id="GO:0005794">
    <property type="term" value="C:Golgi apparatus"/>
    <property type="evidence" value="ECO:0000250"/>
    <property type="project" value="UniProtKB"/>
</dbReference>
<dbReference type="GO" id="GO:0005654">
    <property type="term" value="C:nucleoplasm"/>
    <property type="evidence" value="ECO:0007669"/>
    <property type="project" value="Ensembl"/>
</dbReference>
<dbReference type="GO" id="GO:0005634">
    <property type="term" value="C:nucleus"/>
    <property type="evidence" value="ECO:0000250"/>
    <property type="project" value="UniProtKB"/>
</dbReference>
<dbReference type="GO" id="GO:0004869">
    <property type="term" value="F:cysteine-type endopeptidase inhibitor activity"/>
    <property type="evidence" value="ECO:0007669"/>
    <property type="project" value="UniProtKB-KW"/>
</dbReference>
<dbReference type="GO" id="GO:0004842">
    <property type="term" value="F:ubiquitin-protein transferase activity"/>
    <property type="evidence" value="ECO:0000250"/>
    <property type="project" value="UniProtKB"/>
</dbReference>
<dbReference type="GO" id="GO:0008270">
    <property type="term" value="F:zinc ion binding"/>
    <property type="evidence" value="ECO:0007669"/>
    <property type="project" value="UniProtKB-KW"/>
</dbReference>
<dbReference type="GO" id="GO:0006915">
    <property type="term" value="P:apoptotic process"/>
    <property type="evidence" value="ECO:0007669"/>
    <property type="project" value="UniProtKB-KW"/>
</dbReference>
<dbReference type="GO" id="GO:0002088">
    <property type="term" value="P:lens development in camera-type eye"/>
    <property type="evidence" value="ECO:0000315"/>
    <property type="project" value="MGI"/>
</dbReference>
<dbReference type="GO" id="GO:0043066">
    <property type="term" value="P:negative regulation of apoptotic process"/>
    <property type="evidence" value="ECO:0000250"/>
    <property type="project" value="UniProtKB"/>
</dbReference>
<dbReference type="GO" id="GO:0010804">
    <property type="term" value="P:negative regulation of tumor necrosis factor-mediated signaling pathway"/>
    <property type="evidence" value="ECO:0007669"/>
    <property type="project" value="Ensembl"/>
</dbReference>
<dbReference type="GO" id="GO:0046330">
    <property type="term" value="P:positive regulation of JNK cascade"/>
    <property type="evidence" value="ECO:0007669"/>
    <property type="project" value="Ensembl"/>
</dbReference>
<dbReference type="GO" id="GO:0016567">
    <property type="term" value="P:protein ubiquitination"/>
    <property type="evidence" value="ECO:0000250"/>
    <property type="project" value="UniProtKB"/>
</dbReference>
<dbReference type="GO" id="GO:0042127">
    <property type="term" value="P:regulation of cell population proliferation"/>
    <property type="evidence" value="ECO:0000250"/>
    <property type="project" value="UniProtKB"/>
</dbReference>
<dbReference type="GO" id="GO:0070247">
    <property type="term" value="P:regulation of natural killer cell apoptotic process"/>
    <property type="evidence" value="ECO:0000250"/>
    <property type="project" value="UniProtKB"/>
</dbReference>
<dbReference type="CDD" id="cd00022">
    <property type="entry name" value="BIR"/>
    <property type="match status" value="1"/>
</dbReference>
<dbReference type="CDD" id="cd16713">
    <property type="entry name" value="RING-HC_BIRC2_3_7"/>
    <property type="match status" value="1"/>
</dbReference>
<dbReference type="FunFam" id="3.30.40.10:FF:000184">
    <property type="entry name" value="Baculoviral IAP repeat containing 2"/>
    <property type="match status" value="1"/>
</dbReference>
<dbReference type="FunFam" id="1.10.1170.10:FF:000002">
    <property type="entry name" value="Baculoviral IAP repeat containing 7"/>
    <property type="match status" value="1"/>
</dbReference>
<dbReference type="FunFam" id="1.10.1170.10:FF:000003">
    <property type="entry name" value="E3 ubiquitin-protein ligase XIAP"/>
    <property type="match status" value="1"/>
</dbReference>
<dbReference type="Gene3D" id="1.10.1170.10">
    <property type="entry name" value="Inhibitor Of Apoptosis Protein (2mihbC-IAP-1), Chain A"/>
    <property type="match status" value="1"/>
</dbReference>
<dbReference type="Gene3D" id="3.30.40.10">
    <property type="entry name" value="Zinc/RING finger domain, C3HC4 (zinc finger)"/>
    <property type="match status" value="1"/>
</dbReference>
<dbReference type="InterPro" id="IPR001370">
    <property type="entry name" value="BIR_rpt"/>
</dbReference>
<dbReference type="InterPro" id="IPR050784">
    <property type="entry name" value="IAP"/>
</dbReference>
<dbReference type="InterPro" id="IPR001841">
    <property type="entry name" value="Znf_RING"/>
</dbReference>
<dbReference type="InterPro" id="IPR013083">
    <property type="entry name" value="Znf_RING/FYVE/PHD"/>
</dbReference>
<dbReference type="InterPro" id="IPR017907">
    <property type="entry name" value="Znf_RING_CS"/>
</dbReference>
<dbReference type="PANTHER" id="PTHR10044:SF163">
    <property type="entry name" value="BACULOVIRAL IAP REPEAT-CONTAINING PROTEIN 7"/>
    <property type="match status" value="1"/>
</dbReference>
<dbReference type="PANTHER" id="PTHR10044">
    <property type="entry name" value="INHIBITOR OF APOPTOSIS"/>
    <property type="match status" value="1"/>
</dbReference>
<dbReference type="Pfam" id="PF00653">
    <property type="entry name" value="BIR"/>
    <property type="match status" value="1"/>
</dbReference>
<dbReference type="Pfam" id="PF13920">
    <property type="entry name" value="zf-C3HC4_3"/>
    <property type="match status" value="1"/>
</dbReference>
<dbReference type="SMART" id="SM00238">
    <property type="entry name" value="BIR"/>
    <property type="match status" value="1"/>
</dbReference>
<dbReference type="SMART" id="SM00184">
    <property type="entry name" value="RING"/>
    <property type="match status" value="1"/>
</dbReference>
<dbReference type="SUPFAM" id="SSF57924">
    <property type="entry name" value="Inhibitor of apoptosis (IAP) repeat"/>
    <property type="match status" value="1"/>
</dbReference>
<dbReference type="PROSITE" id="PS01282">
    <property type="entry name" value="BIR_REPEAT_1"/>
    <property type="match status" value="1"/>
</dbReference>
<dbReference type="PROSITE" id="PS50143">
    <property type="entry name" value="BIR_REPEAT_2"/>
    <property type="match status" value="1"/>
</dbReference>
<dbReference type="PROSITE" id="PS00518">
    <property type="entry name" value="ZF_RING_1"/>
    <property type="match status" value="1"/>
</dbReference>
<dbReference type="PROSITE" id="PS50089">
    <property type="entry name" value="ZF_RING_2"/>
    <property type="match status" value="1"/>
</dbReference>
<proteinExistence type="evidence at transcript level"/>
<protein>
    <recommendedName>
        <fullName>Baculoviral IAP repeat-containing protein 7</fullName>
        <ecNumber evidence="2">2.3.2.27</ecNumber>
    </recommendedName>
    <alternativeName>
        <fullName>Livin</fullName>
    </alternativeName>
    <alternativeName>
        <fullName evidence="6">RING-type E3 ubiquitin transferase BIRC7</fullName>
    </alternativeName>
    <component>
        <recommendedName>
            <fullName>Baculoviral IAP repeat-containing protein 7 30 kDa subunit</fullName>
            <shortName>Truncated livin</shortName>
            <shortName>p30-Livin</shortName>
            <shortName>tLivin</shortName>
        </recommendedName>
    </component>
</protein>